<keyword id="KW-0067">ATP-binding</keyword>
<keyword id="KW-0963">Cytoplasm</keyword>
<keyword id="KW-0436">Ligase</keyword>
<keyword id="KW-0547">Nucleotide-binding</keyword>
<keyword id="KW-0566">Pantothenate biosynthesis</keyword>
<proteinExistence type="inferred from homology"/>
<comment type="function">
    <text evidence="1">Catalyzes the condensation of pantoate with beta-alanine in an ATP-dependent reaction via a pantoyl-adenylate intermediate.</text>
</comment>
<comment type="catalytic activity">
    <reaction evidence="1">
        <text>(R)-pantoate + beta-alanine + ATP = (R)-pantothenate + AMP + diphosphate + H(+)</text>
        <dbReference type="Rhea" id="RHEA:10912"/>
        <dbReference type="ChEBI" id="CHEBI:15378"/>
        <dbReference type="ChEBI" id="CHEBI:15980"/>
        <dbReference type="ChEBI" id="CHEBI:29032"/>
        <dbReference type="ChEBI" id="CHEBI:30616"/>
        <dbReference type="ChEBI" id="CHEBI:33019"/>
        <dbReference type="ChEBI" id="CHEBI:57966"/>
        <dbReference type="ChEBI" id="CHEBI:456215"/>
        <dbReference type="EC" id="6.3.2.1"/>
    </reaction>
</comment>
<comment type="pathway">
    <text evidence="1">Cofactor biosynthesis; (R)-pantothenate biosynthesis; (R)-pantothenate from (R)-pantoate and beta-alanine: step 1/1.</text>
</comment>
<comment type="subunit">
    <text evidence="1">Homodimer.</text>
</comment>
<comment type="subcellular location">
    <subcellularLocation>
        <location evidence="1">Cytoplasm</location>
    </subcellularLocation>
</comment>
<comment type="miscellaneous">
    <text evidence="1">The reaction proceeds by a bi uni uni bi ping pong mechanism.</text>
</comment>
<comment type="similarity">
    <text evidence="1">Belongs to the pantothenate synthetase family.</text>
</comment>
<protein>
    <recommendedName>
        <fullName evidence="1">Pantothenate synthetase</fullName>
        <shortName evidence="1">PS</shortName>
        <ecNumber evidence="1">6.3.2.1</ecNumber>
    </recommendedName>
    <alternativeName>
        <fullName evidence="1">Pantoate--beta-alanine ligase</fullName>
    </alternativeName>
    <alternativeName>
        <fullName evidence="1">Pantoate-activating enzyme</fullName>
    </alternativeName>
</protein>
<name>PANC_XANOP</name>
<gene>
    <name evidence="1" type="primary">panC</name>
    <name type="ordered locus">PXO_00689</name>
</gene>
<organism>
    <name type="scientific">Xanthomonas oryzae pv. oryzae (strain PXO99A)</name>
    <dbReference type="NCBI Taxonomy" id="360094"/>
    <lineage>
        <taxon>Bacteria</taxon>
        <taxon>Pseudomonadati</taxon>
        <taxon>Pseudomonadota</taxon>
        <taxon>Gammaproteobacteria</taxon>
        <taxon>Lysobacterales</taxon>
        <taxon>Lysobacteraceae</taxon>
        <taxon>Xanthomonas</taxon>
    </lineage>
</organism>
<reference key="1">
    <citation type="journal article" date="2008" name="BMC Genomics">
        <title>Genome sequence and rapid evolution of the rice pathogen Xanthomonas oryzae pv. oryzae PXO99A.</title>
        <authorList>
            <person name="Salzberg S.L."/>
            <person name="Sommer D.D."/>
            <person name="Schatz M.C."/>
            <person name="Phillippy A.M."/>
            <person name="Rabinowicz P.D."/>
            <person name="Tsuge S."/>
            <person name="Furutani A."/>
            <person name="Ochiai H."/>
            <person name="Delcher A.L."/>
            <person name="Kelley D."/>
            <person name="Madupu R."/>
            <person name="Puiu D."/>
            <person name="Radune D."/>
            <person name="Shumway M."/>
            <person name="Trapnell C."/>
            <person name="Aparna G."/>
            <person name="Jha G."/>
            <person name="Pandey A."/>
            <person name="Patil P.B."/>
            <person name="Ishihara H."/>
            <person name="Meyer D.F."/>
            <person name="Szurek B."/>
            <person name="Verdier V."/>
            <person name="Koebnik R."/>
            <person name="Dow J.M."/>
            <person name="Ryan R.P."/>
            <person name="Hirata H."/>
            <person name="Tsuyumu S."/>
            <person name="Won Lee S."/>
            <person name="Seo Y.-S."/>
            <person name="Sriariyanum M."/>
            <person name="Ronald P.C."/>
            <person name="Sonti R.V."/>
            <person name="Van Sluys M.-A."/>
            <person name="Leach J.E."/>
            <person name="White F.F."/>
            <person name="Bogdanove A.J."/>
        </authorList>
    </citation>
    <scope>NUCLEOTIDE SEQUENCE [LARGE SCALE GENOMIC DNA]</scope>
    <source>
        <strain>PXO99A</strain>
    </source>
</reference>
<sequence length="280" mass="30392">MIQTLTDLSALRALVNGWKREGLRVALVPTMGNLHVGHYSLVMLARQYADRVVSSVFVNPTQFGPNEDFACYPRTPEADLRGLEDAGCDALWLPDVDTMYPLGTALATPIHAPGVSDVLEGECRPGHFDGVCTVVARLFNQVQPDVAAFGKKDYQQLAVIRQMVADLAFPIEILGGSIVREADGLAMSSRNQYLSAEERPISANIHKVLLQMRDSYAVGTPRAQVEDAASHALEQAGFRVDYAVVRLPDLSEPGDGHTGAHVALIAARLGSTRLIDNLEF</sequence>
<evidence type="ECO:0000255" key="1">
    <source>
        <dbReference type="HAMAP-Rule" id="MF_00158"/>
    </source>
</evidence>
<feature type="chain" id="PRO_1000097129" description="Pantothenate synthetase">
    <location>
        <begin position="1"/>
        <end position="280"/>
    </location>
</feature>
<feature type="active site" description="Proton donor" evidence="1">
    <location>
        <position position="38"/>
    </location>
</feature>
<feature type="binding site" evidence="1">
    <location>
        <begin position="31"/>
        <end position="38"/>
    </location>
    <ligand>
        <name>ATP</name>
        <dbReference type="ChEBI" id="CHEBI:30616"/>
    </ligand>
</feature>
<feature type="binding site" evidence="1">
    <location>
        <position position="62"/>
    </location>
    <ligand>
        <name>(R)-pantoate</name>
        <dbReference type="ChEBI" id="CHEBI:15980"/>
    </ligand>
</feature>
<feature type="binding site" evidence="1">
    <location>
        <position position="62"/>
    </location>
    <ligand>
        <name>beta-alanine</name>
        <dbReference type="ChEBI" id="CHEBI:57966"/>
    </ligand>
</feature>
<feature type="binding site" evidence="1">
    <location>
        <begin position="150"/>
        <end position="153"/>
    </location>
    <ligand>
        <name>ATP</name>
        <dbReference type="ChEBI" id="CHEBI:30616"/>
    </ligand>
</feature>
<feature type="binding site" evidence="1">
    <location>
        <position position="156"/>
    </location>
    <ligand>
        <name>(R)-pantoate</name>
        <dbReference type="ChEBI" id="CHEBI:15980"/>
    </ligand>
</feature>
<feature type="binding site" evidence="1">
    <location>
        <position position="179"/>
    </location>
    <ligand>
        <name>ATP</name>
        <dbReference type="ChEBI" id="CHEBI:30616"/>
    </ligand>
</feature>
<feature type="binding site" evidence="1">
    <location>
        <begin position="187"/>
        <end position="190"/>
    </location>
    <ligand>
        <name>ATP</name>
        <dbReference type="ChEBI" id="CHEBI:30616"/>
    </ligand>
</feature>
<accession>B2SJL9</accession>
<dbReference type="EC" id="6.3.2.1" evidence="1"/>
<dbReference type="EMBL" id="CP000967">
    <property type="protein sequence ID" value="ACD58803.1"/>
    <property type="molecule type" value="Genomic_DNA"/>
</dbReference>
<dbReference type="RefSeq" id="WP_011259031.1">
    <property type="nucleotide sequence ID" value="NC_010717.2"/>
</dbReference>
<dbReference type="SMR" id="B2SJL9"/>
<dbReference type="KEGG" id="xop:PXO_00689"/>
<dbReference type="eggNOG" id="COG0414">
    <property type="taxonomic scope" value="Bacteria"/>
</dbReference>
<dbReference type="HOGENOM" id="CLU_047148_0_0_6"/>
<dbReference type="UniPathway" id="UPA00028">
    <property type="reaction ID" value="UER00005"/>
</dbReference>
<dbReference type="Proteomes" id="UP000001740">
    <property type="component" value="Chromosome"/>
</dbReference>
<dbReference type="GO" id="GO:0005829">
    <property type="term" value="C:cytosol"/>
    <property type="evidence" value="ECO:0007669"/>
    <property type="project" value="TreeGrafter"/>
</dbReference>
<dbReference type="GO" id="GO:0005524">
    <property type="term" value="F:ATP binding"/>
    <property type="evidence" value="ECO:0007669"/>
    <property type="project" value="UniProtKB-KW"/>
</dbReference>
<dbReference type="GO" id="GO:0004592">
    <property type="term" value="F:pantoate-beta-alanine ligase activity"/>
    <property type="evidence" value="ECO:0007669"/>
    <property type="project" value="UniProtKB-UniRule"/>
</dbReference>
<dbReference type="GO" id="GO:0015940">
    <property type="term" value="P:pantothenate biosynthetic process"/>
    <property type="evidence" value="ECO:0007669"/>
    <property type="project" value="UniProtKB-UniRule"/>
</dbReference>
<dbReference type="CDD" id="cd00560">
    <property type="entry name" value="PanC"/>
    <property type="match status" value="1"/>
</dbReference>
<dbReference type="FunFam" id="3.40.50.620:FF:000114">
    <property type="entry name" value="Pantothenate synthetase"/>
    <property type="match status" value="1"/>
</dbReference>
<dbReference type="Gene3D" id="3.40.50.620">
    <property type="entry name" value="HUPs"/>
    <property type="match status" value="1"/>
</dbReference>
<dbReference type="Gene3D" id="3.30.1300.10">
    <property type="entry name" value="Pantoate-beta-alanine ligase, C-terminal domain"/>
    <property type="match status" value="1"/>
</dbReference>
<dbReference type="HAMAP" id="MF_00158">
    <property type="entry name" value="PanC"/>
    <property type="match status" value="1"/>
</dbReference>
<dbReference type="InterPro" id="IPR003721">
    <property type="entry name" value="Pantoate_ligase"/>
</dbReference>
<dbReference type="InterPro" id="IPR042176">
    <property type="entry name" value="Pantoate_ligase_C"/>
</dbReference>
<dbReference type="InterPro" id="IPR014729">
    <property type="entry name" value="Rossmann-like_a/b/a_fold"/>
</dbReference>
<dbReference type="NCBIfam" id="TIGR00018">
    <property type="entry name" value="panC"/>
    <property type="match status" value="1"/>
</dbReference>
<dbReference type="PANTHER" id="PTHR21299">
    <property type="entry name" value="CYTIDYLATE KINASE/PANTOATE-BETA-ALANINE LIGASE"/>
    <property type="match status" value="1"/>
</dbReference>
<dbReference type="PANTHER" id="PTHR21299:SF1">
    <property type="entry name" value="PANTOATE--BETA-ALANINE LIGASE"/>
    <property type="match status" value="1"/>
</dbReference>
<dbReference type="Pfam" id="PF02569">
    <property type="entry name" value="Pantoate_ligase"/>
    <property type="match status" value="1"/>
</dbReference>
<dbReference type="SUPFAM" id="SSF52374">
    <property type="entry name" value="Nucleotidylyl transferase"/>
    <property type="match status" value="1"/>
</dbReference>